<accession>Q6NY73</accession>
<feature type="signal peptide" evidence="2">
    <location>
        <begin position="1"/>
        <end position="14"/>
    </location>
</feature>
<feature type="chain" id="PRO_0000357039" description="Galectin-3-binding protein B">
    <location>
        <begin position="15"/>
        <end position="572"/>
    </location>
</feature>
<feature type="domain" description="SRCR" evidence="4">
    <location>
        <begin position="32"/>
        <end position="131"/>
    </location>
</feature>
<feature type="domain" description="BTB" evidence="3">
    <location>
        <begin position="164"/>
        <end position="231"/>
    </location>
</feature>
<feature type="domain" description="BACK">
    <location>
        <begin position="270"/>
        <end position="372"/>
    </location>
</feature>
<feature type="glycosylation site" description="N-linked (GlcNAc...) asparagine" evidence="2">
    <location>
        <position position="135"/>
    </location>
</feature>
<feature type="glycosylation site" description="N-linked (GlcNAc...) asparagine" evidence="2">
    <location>
        <position position="195"/>
    </location>
</feature>
<feature type="glycosylation site" description="N-linked (GlcNAc...) asparagine" evidence="2">
    <location>
        <position position="202"/>
    </location>
</feature>
<feature type="glycosylation site" description="N-linked (GlcNAc...) asparagine" evidence="2">
    <location>
        <position position="430"/>
    </location>
</feature>
<feature type="glycosylation site" description="N-linked (GlcNAc...) asparagine" evidence="2">
    <location>
        <position position="548"/>
    </location>
</feature>
<feature type="disulfide bond" evidence="4">
    <location>
        <begin position="56"/>
        <end position="120"/>
    </location>
</feature>
<feature type="disulfide bond" evidence="4">
    <location>
        <begin position="69"/>
        <end position="130"/>
    </location>
</feature>
<feature type="disulfide bond" evidence="4">
    <location>
        <begin position="100"/>
        <end position="110"/>
    </location>
</feature>
<organism>
    <name type="scientific">Danio rerio</name>
    <name type="common">Zebrafish</name>
    <name type="synonym">Brachydanio rerio</name>
    <dbReference type="NCBI Taxonomy" id="7955"/>
    <lineage>
        <taxon>Eukaryota</taxon>
        <taxon>Metazoa</taxon>
        <taxon>Chordata</taxon>
        <taxon>Craniata</taxon>
        <taxon>Vertebrata</taxon>
        <taxon>Euteleostomi</taxon>
        <taxon>Actinopterygii</taxon>
        <taxon>Neopterygii</taxon>
        <taxon>Teleostei</taxon>
        <taxon>Ostariophysi</taxon>
        <taxon>Cypriniformes</taxon>
        <taxon>Danionidae</taxon>
        <taxon>Danioninae</taxon>
        <taxon>Danio</taxon>
    </lineage>
</organism>
<protein>
    <recommendedName>
        <fullName>Galectin-3-binding protein B</fullName>
    </recommendedName>
    <alternativeName>
        <fullName>Lectin galactoside-binding soluble 3-binding protein B</fullName>
    </alternativeName>
</protein>
<dbReference type="EMBL" id="BC066712">
    <property type="protein sequence ID" value="AAH66712.1"/>
    <property type="molecule type" value="mRNA"/>
</dbReference>
<dbReference type="RefSeq" id="NP_998038.1">
    <property type="nucleotide sequence ID" value="NM_212873.1"/>
</dbReference>
<dbReference type="SMR" id="Q6NY73"/>
<dbReference type="FunCoup" id="Q6NY73">
    <property type="interactions" value="600"/>
</dbReference>
<dbReference type="STRING" id="7955.ENSDARP00000092605"/>
<dbReference type="GlyCosmos" id="Q6NY73">
    <property type="glycosylation" value="5 sites, No reported glycans"/>
</dbReference>
<dbReference type="PaxDb" id="7955-ENSDARP00000092605"/>
<dbReference type="GeneID" id="405809"/>
<dbReference type="KEGG" id="dre:405809"/>
<dbReference type="AGR" id="ZFIN:ZDB-GENE-040426-2262"/>
<dbReference type="CTD" id="405809"/>
<dbReference type="ZFIN" id="ZDB-GENE-040426-2262">
    <property type="gene designation" value="lgals3bp.1"/>
</dbReference>
<dbReference type="eggNOG" id="ENOG502QU48">
    <property type="taxonomic scope" value="Eukaryota"/>
</dbReference>
<dbReference type="InParanoid" id="Q6NY73"/>
<dbReference type="OrthoDB" id="25028at2759"/>
<dbReference type="PhylomeDB" id="Q6NY73"/>
<dbReference type="PRO" id="PR:Q6NY73"/>
<dbReference type="Proteomes" id="UP000000437">
    <property type="component" value="Chromosome 3"/>
</dbReference>
<dbReference type="GO" id="GO:0005576">
    <property type="term" value="C:extracellular region"/>
    <property type="evidence" value="ECO:0007669"/>
    <property type="project" value="UniProtKB-SubCell"/>
</dbReference>
<dbReference type="GO" id="GO:0016020">
    <property type="term" value="C:membrane"/>
    <property type="evidence" value="ECO:0007669"/>
    <property type="project" value="InterPro"/>
</dbReference>
<dbReference type="GO" id="GO:0007155">
    <property type="term" value="P:cell adhesion"/>
    <property type="evidence" value="ECO:0007669"/>
    <property type="project" value="UniProtKB-KW"/>
</dbReference>
<dbReference type="CDD" id="cd18496">
    <property type="entry name" value="BACK_LGALS3BP"/>
    <property type="match status" value="1"/>
</dbReference>
<dbReference type="FunFam" id="3.10.250.10:FF:000001">
    <property type="entry name" value="Lysyl oxidase 4 isoform X1"/>
    <property type="match status" value="1"/>
</dbReference>
<dbReference type="Gene3D" id="1.25.40.420">
    <property type="match status" value="1"/>
</dbReference>
<dbReference type="Gene3D" id="3.30.710.10">
    <property type="entry name" value="Potassium Channel Kv1.1, Chain A"/>
    <property type="match status" value="1"/>
</dbReference>
<dbReference type="Gene3D" id="3.10.250.10">
    <property type="entry name" value="SRCR-like domain"/>
    <property type="match status" value="1"/>
</dbReference>
<dbReference type="InterPro" id="IPR011705">
    <property type="entry name" value="BACK"/>
</dbReference>
<dbReference type="InterPro" id="IPR051481">
    <property type="entry name" value="BTB-POZ/Galectin-3-binding"/>
</dbReference>
<dbReference type="InterPro" id="IPR000210">
    <property type="entry name" value="BTB/POZ_dom"/>
</dbReference>
<dbReference type="InterPro" id="IPR011333">
    <property type="entry name" value="SKP1/BTB/POZ_sf"/>
</dbReference>
<dbReference type="InterPro" id="IPR001190">
    <property type="entry name" value="SRCR"/>
</dbReference>
<dbReference type="InterPro" id="IPR036772">
    <property type="entry name" value="SRCR-like_dom_sf"/>
</dbReference>
<dbReference type="PANTHER" id="PTHR24410:SF16">
    <property type="entry name" value="GALECTIN-3-BINDING PROTEIN"/>
    <property type="match status" value="1"/>
</dbReference>
<dbReference type="PANTHER" id="PTHR24410">
    <property type="entry name" value="HL07962P-RELATED"/>
    <property type="match status" value="1"/>
</dbReference>
<dbReference type="Pfam" id="PF07707">
    <property type="entry name" value="BACK"/>
    <property type="match status" value="1"/>
</dbReference>
<dbReference type="Pfam" id="PF00651">
    <property type="entry name" value="BTB"/>
    <property type="match status" value="1"/>
</dbReference>
<dbReference type="Pfam" id="PF00530">
    <property type="entry name" value="SRCR"/>
    <property type="match status" value="1"/>
</dbReference>
<dbReference type="PRINTS" id="PR00258">
    <property type="entry name" value="SPERACTRCPTR"/>
</dbReference>
<dbReference type="SMART" id="SM00875">
    <property type="entry name" value="BACK"/>
    <property type="match status" value="1"/>
</dbReference>
<dbReference type="SMART" id="SM00202">
    <property type="entry name" value="SR"/>
    <property type="match status" value="1"/>
</dbReference>
<dbReference type="SUPFAM" id="SSF54695">
    <property type="entry name" value="POZ domain"/>
    <property type="match status" value="1"/>
</dbReference>
<dbReference type="SUPFAM" id="SSF56487">
    <property type="entry name" value="SRCR-like"/>
    <property type="match status" value="1"/>
</dbReference>
<dbReference type="PROSITE" id="PS50097">
    <property type="entry name" value="BTB"/>
    <property type="match status" value="1"/>
</dbReference>
<dbReference type="PROSITE" id="PS00420">
    <property type="entry name" value="SRCR_1"/>
    <property type="match status" value="1"/>
</dbReference>
<dbReference type="PROSITE" id="PS50287">
    <property type="entry name" value="SRCR_2"/>
    <property type="match status" value="1"/>
</dbReference>
<name>L3BPB_DANRE</name>
<proteinExistence type="evidence at transcript level"/>
<sequence>MLLLWPLLFLQVSALRRTLFDRPKQLMQEGRVRLVGVIPSSGRVEVYHDGQWGTVCDDGWDLAEAQVVCRQLGFPGAVSVATGGQYGEGSGRVWLDDMNCKGSESLLSECSFKGWGVSDCTHKEDAGVICAPGKNTTSIRQMSVDNSLGLSDDLGLLFDSEDGCDFTIAVRDLSEEAELTFCVHRVILMIYPELNLTHDTRNITVDISQTCHTHVPRFLRYLYTRQIDVSTTSAQCLHQLAFIFGVQKLMEDVGRVFTALIPEDNTFQTQVSMYEYGVRTGDLVLQENVLQYLSWNCEFLISSPVWSTVSFDMMDALLQRSDLIVKDEAVLLEALERWIQDKGDQISSDKQVSLLNHIRFLLIPVDKLYDIQFSSSALRQSNEKLYLTGLLRGFQFNALPFSKIRDQVVKLSGNYIPRIYIGDEWSLGLNVSTVNNPHYNPYQYGYDQRYGQSNRIEKYLSTPAHPSAVYRGQMIQWQAQVFRSVQDCRNSGISCNSVPLVRFLATSSQYSYSSTIRYNNRLVLTCKNQNNVFHVQDFKNNMAVIPTNSSMGLPNPCPDDYSFRFVVRPQYI</sequence>
<gene>
    <name type="primary">lgals3bpb</name>
    <name type="ORF">zgc:77059</name>
</gene>
<keyword id="KW-0130">Cell adhesion</keyword>
<keyword id="KW-1015">Disulfide bond</keyword>
<keyword id="KW-0272">Extracellular matrix</keyword>
<keyword id="KW-0325">Glycoprotein</keyword>
<keyword id="KW-1185">Reference proteome</keyword>
<keyword id="KW-0964">Secreted</keyword>
<keyword id="KW-0732">Signal</keyword>
<evidence type="ECO:0000250" key="1"/>
<evidence type="ECO:0000255" key="2"/>
<evidence type="ECO:0000255" key="3">
    <source>
        <dbReference type="PROSITE-ProRule" id="PRU00037"/>
    </source>
</evidence>
<evidence type="ECO:0000255" key="4">
    <source>
        <dbReference type="PROSITE-ProRule" id="PRU00196"/>
    </source>
</evidence>
<reference key="1">
    <citation type="submission" date="2004-03" db="EMBL/GenBank/DDBJ databases">
        <authorList>
            <consortium name="NIH - Zebrafish Gene Collection (ZGC) project"/>
        </authorList>
    </citation>
    <scope>NUCLEOTIDE SEQUENCE [LARGE SCALE MRNA]</scope>
    <source>
        <tissue>Kidney</tissue>
    </source>
</reference>
<comment type="function">
    <text evidence="1">Promotes integrin-mediated cell adhesion.</text>
</comment>
<comment type="subcellular location">
    <subcellularLocation>
        <location evidence="1">Secreted</location>
    </subcellularLocation>
    <subcellularLocation>
        <location evidence="1">Secreted</location>
        <location evidence="1">Extracellular space</location>
        <location evidence="1">Extracellular matrix</location>
    </subcellularLocation>
</comment>